<gene>
    <name evidence="1" type="primary">efp</name>
    <name type="ordered locus">EcSMS35_4616</name>
</gene>
<dbReference type="EMBL" id="CP000970">
    <property type="protein sequence ID" value="ACB17350.1"/>
    <property type="molecule type" value="Genomic_DNA"/>
</dbReference>
<dbReference type="RefSeq" id="WP_000257278.1">
    <property type="nucleotide sequence ID" value="NC_010498.1"/>
</dbReference>
<dbReference type="SMR" id="B1LQG8"/>
<dbReference type="GeneID" id="93777677"/>
<dbReference type="KEGG" id="ecm:EcSMS35_4616"/>
<dbReference type="HOGENOM" id="CLU_074944_0_0_6"/>
<dbReference type="UniPathway" id="UPA00345"/>
<dbReference type="Proteomes" id="UP000007011">
    <property type="component" value="Chromosome"/>
</dbReference>
<dbReference type="GO" id="GO:0005829">
    <property type="term" value="C:cytosol"/>
    <property type="evidence" value="ECO:0007669"/>
    <property type="project" value="UniProtKB-ARBA"/>
</dbReference>
<dbReference type="GO" id="GO:0003746">
    <property type="term" value="F:translation elongation factor activity"/>
    <property type="evidence" value="ECO:0007669"/>
    <property type="project" value="UniProtKB-UniRule"/>
</dbReference>
<dbReference type="GO" id="GO:0043043">
    <property type="term" value="P:peptide biosynthetic process"/>
    <property type="evidence" value="ECO:0007669"/>
    <property type="project" value="InterPro"/>
</dbReference>
<dbReference type="CDD" id="cd04470">
    <property type="entry name" value="S1_EF-P_repeat_1"/>
    <property type="match status" value="1"/>
</dbReference>
<dbReference type="CDD" id="cd05794">
    <property type="entry name" value="S1_EF-P_repeat_2"/>
    <property type="match status" value="1"/>
</dbReference>
<dbReference type="FunFam" id="2.30.30.30:FF:000003">
    <property type="entry name" value="Elongation factor P"/>
    <property type="match status" value="1"/>
</dbReference>
<dbReference type="FunFam" id="2.40.50.140:FF:000004">
    <property type="entry name" value="Elongation factor P"/>
    <property type="match status" value="1"/>
</dbReference>
<dbReference type="FunFam" id="2.40.50.140:FF:000009">
    <property type="entry name" value="Elongation factor P"/>
    <property type="match status" value="1"/>
</dbReference>
<dbReference type="Gene3D" id="2.30.30.30">
    <property type="match status" value="1"/>
</dbReference>
<dbReference type="Gene3D" id="2.40.50.140">
    <property type="entry name" value="Nucleic acid-binding proteins"/>
    <property type="match status" value="2"/>
</dbReference>
<dbReference type="HAMAP" id="MF_00141">
    <property type="entry name" value="EF_P"/>
    <property type="match status" value="1"/>
</dbReference>
<dbReference type="InterPro" id="IPR015365">
    <property type="entry name" value="Elong-fact-P_C"/>
</dbReference>
<dbReference type="InterPro" id="IPR012340">
    <property type="entry name" value="NA-bd_OB-fold"/>
</dbReference>
<dbReference type="InterPro" id="IPR014722">
    <property type="entry name" value="Rib_uL2_dom2"/>
</dbReference>
<dbReference type="InterPro" id="IPR020599">
    <property type="entry name" value="Transl_elong_fac_P/YeiP"/>
</dbReference>
<dbReference type="InterPro" id="IPR013185">
    <property type="entry name" value="Transl_elong_KOW-like"/>
</dbReference>
<dbReference type="InterPro" id="IPR001059">
    <property type="entry name" value="Transl_elong_P/YeiP_cen"/>
</dbReference>
<dbReference type="InterPro" id="IPR013852">
    <property type="entry name" value="Transl_elong_P/YeiP_CS"/>
</dbReference>
<dbReference type="InterPro" id="IPR011768">
    <property type="entry name" value="Transl_elongation_fac_P"/>
</dbReference>
<dbReference type="InterPro" id="IPR008991">
    <property type="entry name" value="Translation_prot_SH3-like_sf"/>
</dbReference>
<dbReference type="NCBIfam" id="TIGR00038">
    <property type="entry name" value="efp"/>
    <property type="match status" value="1"/>
</dbReference>
<dbReference type="NCBIfam" id="NF001810">
    <property type="entry name" value="PRK00529.1"/>
    <property type="match status" value="1"/>
</dbReference>
<dbReference type="PANTHER" id="PTHR30053">
    <property type="entry name" value="ELONGATION FACTOR P"/>
    <property type="match status" value="1"/>
</dbReference>
<dbReference type="PANTHER" id="PTHR30053:SF12">
    <property type="entry name" value="ELONGATION FACTOR P (EF-P) FAMILY PROTEIN"/>
    <property type="match status" value="1"/>
</dbReference>
<dbReference type="Pfam" id="PF01132">
    <property type="entry name" value="EFP"/>
    <property type="match status" value="1"/>
</dbReference>
<dbReference type="Pfam" id="PF08207">
    <property type="entry name" value="EFP_N"/>
    <property type="match status" value="1"/>
</dbReference>
<dbReference type="Pfam" id="PF09285">
    <property type="entry name" value="Elong-fact-P_C"/>
    <property type="match status" value="1"/>
</dbReference>
<dbReference type="PIRSF" id="PIRSF005901">
    <property type="entry name" value="EF-P"/>
    <property type="match status" value="1"/>
</dbReference>
<dbReference type="SMART" id="SM01185">
    <property type="entry name" value="EFP"/>
    <property type="match status" value="1"/>
</dbReference>
<dbReference type="SMART" id="SM00841">
    <property type="entry name" value="Elong-fact-P_C"/>
    <property type="match status" value="1"/>
</dbReference>
<dbReference type="SUPFAM" id="SSF50249">
    <property type="entry name" value="Nucleic acid-binding proteins"/>
    <property type="match status" value="2"/>
</dbReference>
<dbReference type="SUPFAM" id="SSF50104">
    <property type="entry name" value="Translation proteins SH3-like domain"/>
    <property type="match status" value="1"/>
</dbReference>
<dbReference type="PROSITE" id="PS01275">
    <property type="entry name" value="EFP"/>
    <property type="match status" value="1"/>
</dbReference>
<sequence length="188" mass="20591">MATYYSNDFRAGLKIMLDGEPYAVEASEFVKPGKGQAFARVKLRRLLTGTRVEKTFKSTDSAEGADVVDMNLTYLYNDGEFWHFMNNETFEQLSADAKAIGDNAKWLLDQAECIVTLWNGQPISVTPPNFVELEIVDTDPGLKGDTAGTGGKPATLSTGAVVKVPLFVQIGEVIKVDTRSGEYVSRVK</sequence>
<accession>B1LQG8</accession>
<feature type="chain" id="PRO_1000117899" description="Elongation factor P">
    <location>
        <begin position="1"/>
        <end position="188"/>
    </location>
</feature>
<feature type="modified residue" description="N6-(3,6-diaminohexanoyl)-5-hydroxylysine" evidence="1">
    <location>
        <position position="34"/>
    </location>
</feature>
<keyword id="KW-0963">Cytoplasm</keyword>
<keyword id="KW-0251">Elongation factor</keyword>
<keyword id="KW-0379">Hydroxylation</keyword>
<keyword id="KW-0648">Protein biosynthesis</keyword>
<reference key="1">
    <citation type="journal article" date="2008" name="J. Bacteriol.">
        <title>Insights into the environmental resistance gene pool from the genome sequence of the multidrug-resistant environmental isolate Escherichia coli SMS-3-5.</title>
        <authorList>
            <person name="Fricke W.F."/>
            <person name="Wright M.S."/>
            <person name="Lindell A.H."/>
            <person name="Harkins D.M."/>
            <person name="Baker-Austin C."/>
            <person name="Ravel J."/>
            <person name="Stepanauskas R."/>
        </authorList>
    </citation>
    <scope>NUCLEOTIDE SEQUENCE [LARGE SCALE GENOMIC DNA]</scope>
    <source>
        <strain>SMS-3-5 / SECEC</strain>
    </source>
</reference>
<name>EFP_ECOSM</name>
<evidence type="ECO:0000255" key="1">
    <source>
        <dbReference type="HAMAP-Rule" id="MF_00141"/>
    </source>
</evidence>
<comment type="function">
    <text evidence="1">Involved in peptide bond synthesis. Alleviates ribosome stalling that occurs when 3 or more consecutive Pro residues or the sequence PPG is present in a protein, possibly by augmenting the peptidyl transferase activity of the ribosome. Modification of Lys-34 is required for alleviation.</text>
</comment>
<comment type="pathway">
    <text evidence="1">Protein biosynthesis; polypeptide chain elongation.</text>
</comment>
<comment type="subcellular location">
    <subcellularLocation>
        <location evidence="1">Cytoplasm</location>
    </subcellularLocation>
</comment>
<comment type="PTM">
    <text evidence="1">Is beta-lysylated on the epsilon-amino group of Lys-34 by the combined action of EpmA and EpmB, and then hydroxylated on the C5 position of the same residue by EpmC. Lysylation is critical for the stimulatory effect of EF-P on peptide-bond formation. The lysylation moiety would extend toward the peptidyltransferase center and stabilize the terminal 3-CCA end of the tRNA. The hydroxylation of the C5 position on Lys-34 would allow additional potential stabilizing hydrogen-bond interactions with the P-tRNA.</text>
</comment>
<comment type="similarity">
    <text evidence="1">Belongs to the elongation factor P family.</text>
</comment>
<proteinExistence type="inferred from homology"/>
<organism>
    <name type="scientific">Escherichia coli (strain SMS-3-5 / SECEC)</name>
    <dbReference type="NCBI Taxonomy" id="439855"/>
    <lineage>
        <taxon>Bacteria</taxon>
        <taxon>Pseudomonadati</taxon>
        <taxon>Pseudomonadota</taxon>
        <taxon>Gammaproteobacteria</taxon>
        <taxon>Enterobacterales</taxon>
        <taxon>Enterobacteriaceae</taxon>
        <taxon>Escherichia</taxon>
    </lineage>
</organism>
<protein>
    <recommendedName>
        <fullName evidence="1">Elongation factor P</fullName>
        <shortName evidence="1">EF-P</shortName>
    </recommendedName>
</protein>